<comment type="function">
    <text evidence="1">Catalyzes the oxidation of either pyridoxine 5'-phosphate (PNP) or pyridoxamine 5'-phosphate (PMP) into pyridoxal 5'-phosphate (PLP).</text>
</comment>
<comment type="catalytic activity">
    <reaction evidence="1">
        <text>pyridoxamine 5'-phosphate + O2 + H2O = pyridoxal 5'-phosphate + H2O2 + NH4(+)</text>
        <dbReference type="Rhea" id="RHEA:15817"/>
        <dbReference type="ChEBI" id="CHEBI:15377"/>
        <dbReference type="ChEBI" id="CHEBI:15379"/>
        <dbReference type="ChEBI" id="CHEBI:16240"/>
        <dbReference type="ChEBI" id="CHEBI:28938"/>
        <dbReference type="ChEBI" id="CHEBI:58451"/>
        <dbReference type="ChEBI" id="CHEBI:597326"/>
        <dbReference type="EC" id="1.4.3.5"/>
    </reaction>
</comment>
<comment type="catalytic activity">
    <reaction evidence="1">
        <text>pyridoxine 5'-phosphate + O2 = pyridoxal 5'-phosphate + H2O2</text>
        <dbReference type="Rhea" id="RHEA:15149"/>
        <dbReference type="ChEBI" id="CHEBI:15379"/>
        <dbReference type="ChEBI" id="CHEBI:16240"/>
        <dbReference type="ChEBI" id="CHEBI:58589"/>
        <dbReference type="ChEBI" id="CHEBI:597326"/>
        <dbReference type="EC" id="1.4.3.5"/>
    </reaction>
</comment>
<comment type="cofactor">
    <cofactor evidence="1">
        <name>FMN</name>
        <dbReference type="ChEBI" id="CHEBI:58210"/>
    </cofactor>
    <text evidence="1">Binds 1 FMN per subunit.</text>
</comment>
<comment type="pathway">
    <text evidence="1">Cofactor metabolism; pyridoxal 5'-phosphate salvage; pyridoxal 5'-phosphate from pyridoxamine 5'-phosphate: step 1/1.</text>
</comment>
<comment type="pathway">
    <text evidence="1">Cofactor metabolism; pyridoxal 5'-phosphate salvage; pyridoxal 5'-phosphate from pyridoxine 5'-phosphate: step 1/1.</text>
</comment>
<comment type="subunit">
    <text evidence="1">Homodimer.</text>
</comment>
<comment type="similarity">
    <text evidence="1">Belongs to the pyridoxamine 5'-phosphate oxidase family.</text>
</comment>
<keyword id="KW-0285">Flavoprotein</keyword>
<keyword id="KW-0288">FMN</keyword>
<keyword id="KW-0560">Oxidoreductase</keyword>
<keyword id="KW-0664">Pyridoxine biosynthesis</keyword>
<sequence length="220" mass="24387">MKKADNEHLARMRVEYGSVEKDGSADLDVDWLADGWVALLRRWLADAEAAGIAEPNAIVLGTVDAGGRPVTRTVLCKSVDDTGITFFTNYGSAKGEDLASTPYASATFPWFALGRQVHVRGPVTKVSAEETADYWSKRPRGSQLGAWASQQSRPIASRAELLDQLAEVTERFADHDTVPVPPDWGGYRITAEVVEFWQGRESRVHNRIRVHDGRIERLQP</sequence>
<gene>
    <name evidence="1" type="primary">pdxH</name>
    <name type="ordered locus">Mkms_4545</name>
</gene>
<evidence type="ECO:0000255" key="1">
    <source>
        <dbReference type="HAMAP-Rule" id="MF_01629"/>
    </source>
</evidence>
<dbReference type="EC" id="1.4.3.5" evidence="1"/>
<dbReference type="EMBL" id="CP000518">
    <property type="protein sequence ID" value="ABL93736.1"/>
    <property type="molecule type" value="Genomic_DNA"/>
</dbReference>
<dbReference type="SMR" id="A1ULM8"/>
<dbReference type="STRING" id="189918.Mkms_4545"/>
<dbReference type="KEGG" id="mkm:Mkms_4545"/>
<dbReference type="HOGENOM" id="CLU_032263_2_2_11"/>
<dbReference type="OrthoDB" id="9780392at2"/>
<dbReference type="UniPathway" id="UPA01068">
    <property type="reaction ID" value="UER00304"/>
</dbReference>
<dbReference type="UniPathway" id="UPA01068">
    <property type="reaction ID" value="UER00305"/>
</dbReference>
<dbReference type="GO" id="GO:0010181">
    <property type="term" value="F:FMN binding"/>
    <property type="evidence" value="ECO:0007669"/>
    <property type="project" value="UniProtKB-UniRule"/>
</dbReference>
<dbReference type="GO" id="GO:0004733">
    <property type="term" value="F:pyridoxamine phosphate oxidase activity"/>
    <property type="evidence" value="ECO:0007669"/>
    <property type="project" value="UniProtKB-UniRule"/>
</dbReference>
<dbReference type="GO" id="GO:0008615">
    <property type="term" value="P:pyridoxine biosynthetic process"/>
    <property type="evidence" value="ECO:0007669"/>
    <property type="project" value="UniProtKB-KW"/>
</dbReference>
<dbReference type="Gene3D" id="2.30.110.10">
    <property type="entry name" value="Electron Transport, Fmn-binding Protein, Chain A"/>
    <property type="match status" value="1"/>
</dbReference>
<dbReference type="HAMAP" id="MF_01629">
    <property type="entry name" value="PdxH"/>
    <property type="match status" value="1"/>
</dbReference>
<dbReference type="InterPro" id="IPR000659">
    <property type="entry name" value="Pyridox_Oxase"/>
</dbReference>
<dbReference type="InterPro" id="IPR019740">
    <property type="entry name" value="Pyridox_Oxase_CS"/>
</dbReference>
<dbReference type="InterPro" id="IPR011576">
    <property type="entry name" value="Pyridox_Oxase_N"/>
</dbReference>
<dbReference type="InterPro" id="IPR019576">
    <property type="entry name" value="Pyridoxamine_oxidase_dimer_C"/>
</dbReference>
<dbReference type="InterPro" id="IPR012349">
    <property type="entry name" value="Split_barrel_FMN-bd"/>
</dbReference>
<dbReference type="NCBIfam" id="TIGR00558">
    <property type="entry name" value="pdxH"/>
    <property type="match status" value="1"/>
</dbReference>
<dbReference type="NCBIfam" id="NF004231">
    <property type="entry name" value="PRK05679.1"/>
    <property type="match status" value="1"/>
</dbReference>
<dbReference type="PANTHER" id="PTHR10851:SF0">
    <property type="entry name" value="PYRIDOXINE-5'-PHOSPHATE OXIDASE"/>
    <property type="match status" value="1"/>
</dbReference>
<dbReference type="PANTHER" id="PTHR10851">
    <property type="entry name" value="PYRIDOXINE-5-PHOSPHATE OXIDASE"/>
    <property type="match status" value="1"/>
</dbReference>
<dbReference type="Pfam" id="PF10590">
    <property type="entry name" value="PNP_phzG_C"/>
    <property type="match status" value="1"/>
</dbReference>
<dbReference type="Pfam" id="PF01243">
    <property type="entry name" value="PNPOx_N"/>
    <property type="match status" value="1"/>
</dbReference>
<dbReference type="PIRSF" id="PIRSF000190">
    <property type="entry name" value="Pyd_amn-ph_oxd"/>
    <property type="match status" value="1"/>
</dbReference>
<dbReference type="SUPFAM" id="SSF50475">
    <property type="entry name" value="FMN-binding split barrel"/>
    <property type="match status" value="1"/>
</dbReference>
<dbReference type="PROSITE" id="PS01064">
    <property type="entry name" value="PYRIDOX_OXIDASE"/>
    <property type="match status" value="1"/>
</dbReference>
<proteinExistence type="inferred from homology"/>
<reference key="1">
    <citation type="submission" date="2006-12" db="EMBL/GenBank/DDBJ databases">
        <title>Complete sequence of chromosome of Mycobacterium sp. KMS.</title>
        <authorList>
            <consortium name="US DOE Joint Genome Institute"/>
            <person name="Copeland A."/>
            <person name="Lucas S."/>
            <person name="Lapidus A."/>
            <person name="Barry K."/>
            <person name="Detter J.C."/>
            <person name="Glavina del Rio T."/>
            <person name="Hammon N."/>
            <person name="Israni S."/>
            <person name="Dalin E."/>
            <person name="Tice H."/>
            <person name="Pitluck S."/>
            <person name="Kiss H."/>
            <person name="Brettin T."/>
            <person name="Bruce D."/>
            <person name="Han C."/>
            <person name="Tapia R."/>
            <person name="Gilna P."/>
            <person name="Schmutz J."/>
            <person name="Larimer F."/>
            <person name="Land M."/>
            <person name="Hauser L."/>
            <person name="Kyrpides N."/>
            <person name="Mikhailova N."/>
            <person name="Miller C.D."/>
            <person name="Richardson P."/>
        </authorList>
    </citation>
    <scope>NUCLEOTIDE SEQUENCE [LARGE SCALE GENOMIC DNA]</scope>
    <source>
        <strain>KMS</strain>
    </source>
</reference>
<accession>A1ULM8</accession>
<organism>
    <name type="scientific">Mycobacterium sp. (strain KMS)</name>
    <dbReference type="NCBI Taxonomy" id="189918"/>
    <lineage>
        <taxon>Bacteria</taxon>
        <taxon>Bacillati</taxon>
        <taxon>Actinomycetota</taxon>
        <taxon>Actinomycetes</taxon>
        <taxon>Mycobacteriales</taxon>
        <taxon>Mycobacteriaceae</taxon>
        <taxon>Mycobacterium</taxon>
    </lineage>
</organism>
<protein>
    <recommendedName>
        <fullName evidence="1">Pyridoxine/pyridoxamine 5'-phosphate oxidase</fullName>
        <ecNumber evidence="1">1.4.3.5</ecNumber>
    </recommendedName>
    <alternativeName>
        <fullName evidence="1">PNP/PMP oxidase</fullName>
        <shortName evidence="1">PNPOx</shortName>
    </alternativeName>
    <alternativeName>
        <fullName evidence="1">Pyridoxal 5'-phosphate synthase</fullName>
    </alternativeName>
</protein>
<feature type="chain" id="PRO_0000292307" description="Pyridoxine/pyridoxamine 5'-phosphate oxidase">
    <location>
        <begin position="1"/>
        <end position="220"/>
    </location>
</feature>
<feature type="binding site" evidence="1">
    <location>
        <begin position="13"/>
        <end position="16"/>
    </location>
    <ligand>
        <name>substrate</name>
    </ligand>
</feature>
<feature type="binding site" evidence="1">
    <location>
        <begin position="72"/>
        <end position="77"/>
    </location>
    <ligand>
        <name>FMN</name>
        <dbReference type="ChEBI" id="CHEBI:58210"/>
    </ligand>
</feature>
<feature type="binding site" evidence="1">
    <location>
        <position position="77"/>
    </location>
    <ligand>
        <name>substrate</name>
    </ligand>
</feature>
<feature type="binding site" evidence="1">
    <location>
        <begin position="87"/>
        <end position="88"/>
    </location>
    <ligand>
        <name>FMN</name>
        <dbReference type="ChEBI" id="CHEBI:58210"/>
    </ligand>
</feature>
<feature type="binding site" evidence="1">
    <location>
        <position position="94"/>
    </location>
    <ligand>
        <name>FMN</name>
        <dbReference type="ChEBI" id="CHEBI:58210"/>
    </ligand>
</feature>
<feature type="binding site" evidence="1">
    <location>
        <position position="116"/>
    </location>
    <ligand>
        <name>FMN</name>
        <dbReference type="ChEBI" id="CHEBI:58210"/>
    </ligand>
</feature>
<feature type="binding site" evidence="1">
    <location>
        <position position="134"/>
    </location>
    <ligand>
        <name>substrate</name>
    </ligand>
</feature>
<feature type="binding site" evidence="1">
    <location>
        <position position="138"/>
    </location>
    <ligand>
        <name>substrate</name>
    </ligand>
</feature>
<feature type="binding site" evidence="1">
    <location>
        <position position="142"/>
    </location>
    <ligand>
        <name>substrate</name>
    </ligand>
</feature>
<feature type="binding site" evidence="1">
    <location>
        <begin position="151"/>
        <end position="152"/>
    </location>
    <ligand>
        <name>FMN</name>
        <dbReference type="ChEBI" id="CHEBI:58210"/>
    </ligand>
</feature>
<feature type="binding site" evidence="1">
    <location>
        <position position="197"/>
    </location>
    <ligand>
        <name>FMN</name>
        <dbReference type="ChEBI" id="CHEBI:58210"/>
    </ligand>
</feature>
<feature type="binding site" evidence="1">
    <location>
        <begin position="203"/>
        <end position="205"/>
    </location>
    <ligand>
        <name>substrate</name>
    </ligand>
</feature>
<feature type="binding site" evidence="1">
    <location>
        <position position="207"/>
    </location>
    <ligand>
        <name>FMN</name>
        <dbReference type="ChEBI" id="CHEBI:58210"/>
    </ligand>
</feature>
<name>PDXH_MYCSK</name>